<accession>A8LIU9</accession>
<protein>
    <recommendedName>
        <fullName evidence="1">NADH-quinone oxidoreductase subunit H</fullName>
        <ecNumber evidence="1">7.1.1.-</ecNumber>
    </recommendedName>
    <alternativeName>
        <fullName evidence="1">NADH dehydrogenase I subunit H</fullName>
    </alternativeName>
    <alternativeName>
        <fullName evidence="1">NDH-1 subunit H</fullName>
    </alternativeName>
</protein>
<evidence type="ECO:0000255" key="1">
    <source>
        <dbReference type="HAMAP-Rule" id="MF_01350"/>
    </source>
</evidence>
<name>NUOH_DINSH</name>
<reference key="1">
    <citation type="journal article" date="2010" name="ISME J.">
        <title>The complete genome sequence of the algal symbiont Dinoroseobacter shibae: a hitchhiker's guide to life in the sea.</title>
        <authorList>
            <person name="Wagner-Dobler I."/>
            <person name="Ballhausen B."/>
            <person name="Berger M."/>
            <person name="Brinkhoff T."/>
            <person name="Buchholz I."/>
            <person name="Bunk B."/>
            <person name="Cypionka H."/>
            <person name="Daniel R."/>
            <person name="Drepper T."/>
            <person name="Gerdts G."/>
            <person name="Hahnke S."/>
            <person name="Han C."/>
            <person name="Jahn D."/>
            <person name="Kalhoefer D."/>
            <person name="Kiss H."/>
            <person name="Klenk H.P."/>
            <person name="Kyrpides N."/>
            <person name="Liebl W."/>
            <person name="Liesegang H."/>
            <person name="Meincke L."/>
            <person name="Pati A."/>
            <person name="Petersen J."/>
            <person name="Piekarski T."/>
            <person name="Pommerenke C."/>
            <person name="Pradella S."/>
            <person name="Pukall R."/>
            <person name="Rabus R."/>
            <person name="Stackebrandt E."/>
            <person name="Thole S."/>
            <person name="Thompson L."/>
            <person name="Tielen P."/>
            <person name="Tomasch J."/>
            <person name="von Jan M."/>
            <person name="Wanphrut N."/>
            <person name="Wichels A."/>
            <person name="Zech H."/>
            <person name="Simon M."/>
        </authorList>
    </citation>
    <scope>NUCLEOTIDE SEQUENCE [LARGE SCALE GENOMIC DNA]</scope>
    <source>
        <strain>DSM 16493 / NCIMB 14021 / DFL 12</strain>
    </source>
</reference>
<sequence>MADFFSTGPGIAVLIIAQCLAVLGFVMVSLLFLVYGDRKIWAAVQMRRGPNVVGAFGLLQTVADALKYVVKEVVVPAGADKPVFMLAPMTSFVLAMIAWAVIPFNDGWVLADINVAILYVFAVSSLEVYGVIMGGWASNSKYPFLGSLRSAAQMISYEVSIGLIIIGVILSTGSMNFSAIVAAQDGDFGFFSWYWLPHLPMVFLFFISALAETNRPPFDLPEAESELVAGYQVEYSSTPFLLFMAGEYIAIFLMCALITLLFFGGWLSPIPFLPDGPIWMVGKMAFFFFLFAMVKAIVPRYRYDQLMRLGWKVFLPFSLAWVVFVAFAAQFELFGGAYARWAIGG</sequence>
<proteinExistence type="inferred from homology"/>
<dbReference type="EC" id="7.1.1.-" evidence="1"/>
<dbReference type="EMBL" id="CP000830">
    <property type="protein sequence ID" value="ABV93063.1"/>
    <property type="molecule type" value="Genomic_DNA"/>
</dbReference>
<dbReference type="RefSeq" id="WP_012177993.1">
    <property type="nucleotide sequence ID" value="NC_009952.1"/>
</dbReference>
<dbReference type="SMR" id="A8LIU9"/>
<dbReference type="STRING" id="398580.Dshi_1321"/>
<dbReference type="KEGG" id="dsh:Dshi_1321"/>
<dbReference type="eggNOG" id="COG1005">
    <property type="taxonomic scope" value="Bacteria"/>
</dbReference>
<dbReference type="HOGENOM" id="CLU_015134_0_1_5"/>
<dbReference type="OrthoDB" id="9803734at2"/>
<dbReference type="Proteomes" id="UP000006833">
    <property type="component" value="Chromosome"/>
</dbReference>
<dbReference type="GO" id="GO:0005886">
    <property type="term" value="C:plasma membrane"/>
    <property type="evidence" value="ECO:0007669"/>
    <property type="project" value="UniProtKB-SubCell"/>
</dbReference>
<dbReference type="GO" id="GO:0003954">
    <property type="term" value="F:NADH dehydrogenase activity"/>
    <property type="evidence" value="ECO:0007669"/>
    <property type="project" value="TreeGrafter"/>
</dbReference>
<dbReference type="GO" id="GO:0016655">
    <property type="term" value="F:oxidoreductase activity, acting on NAD(P)H, quinone or similar compound as acceptor"/>
    <property type="evidence" value="ECO:0007669"/>
    <property type="project" value="UniProtKB-UniRule"/>
</dbReference>
<dbReference type="GO" id="GO:0048038">
    <property type="term" value="F:quinone binding"/>
    <property type="evidence" value="ECO:0007669"/>
    <property type="project" value="UniProtKB-KW"/>
</dbReference>
<dbReference type="GO" id="GO:0009060">
    <property type="term" value="P:aerobic respiration"/>
    <property type="evidence" value="ECO:0007669"/>
    <property type="project" value="TreeGrafter"/>
</dbReference>
<dbReference type="HAMAP" id="MF_01350">
    <property type="entry name" value="NDH1_NuoH"/>
    <property type="match status" value="1"/>
</dbReference>
<dbReference type="InterPro" id="IPR001694">
    <property type="entry name" value="NADH_UbQ_OxRdtase_su1/FPO"/>
</dbReference>
<dbReference type="InterPro" id="IPR018086">
    <property type="entry name" value="NADH_UbQ_OxRdtase_su1_CS"/>
</dbReference>
<dbReference type="NCBIfam" id="NF004741">
    <property type="entry name" value="PRK06076.1-2"/>
    <property type="match status" value="1"/>
</dbReference>
<dbReference type="NCBIfam" id="NF004745">
    <property type="entry name" value="PRK06076.1-6"/>
    <property type="match status" value="1"/>
</dbReference>
<dbReference type="PANTHER" id="PTHR11432">
    <property type="entry name" value="NADH DEHYDROGENASE SUBUNIT 1"/>
    <property type="match status" value="1"/>
</dbReference>
<dbReference type="PANTHER" id="PTHR11432:SF3">
    <property type="entry name" value="NADH-UBIQUINONE OXIDOREDUCTASE CHAIN 1"/>
    <property type="match status" value="1"/>
</dbReference>
<dbReference type="Pfam" id="PF00146">
    <property type="entry name" value="NADHdh"/>
    <property type="match status" value="1"/>
</dbReference>
<dbReference type="PROSITE" id="PS00667">
    <property type="entry name" value="COMPLEX1_ND1_1"/>
    <property type="match status" value="1"/>
</dbReference>
<dbReference type="PROSITE" id="PS00668">
    <property type="entry name" value="COMPLEX1_ND1_2"/>
    <property type="match status" value="1"/>
</dbReference>
<comment type="function">
    <text evidence="1">NDH-1 shuttles electrons from NADH, via FMN and iron-sulfur (Fe-S) centers, to quinones in the respiratory chain. The immediate electron acceptor for the enzyme in this species is believed to be ubiquinone. Couples the redox reaction to proton translocation (for every two electrons transferred, four hydrogen ions are translocated across the cytoplasmic membrane), and thus conserves the redox energy in a proton gradient. This subunit may bind ubiquinone.</text>
</comment>
<comment type="catalytic activity">
    <reaction evidence="1">
        <text>a quinone + NADH + 5 H(+)(in) = a quinol + NAD(+) + 4 H(+)(out)</text>
        <dbReference type="Rhea" id="RHEA:57888"/>
        <dbReference type="ChEBI" id="CHEBI:15378"/>
        <dbReference type="ChEBI" id="CHEBI:24646"/>
        <dbReference type="ChEBI" id="CHEBI:57540"/>
        <dbReference type="ChEBI" id="CHEBI:57945"/>
        <dbReference type="ChEBI" id="CHEBI:132124"/>
    </reaction>
</comment>
<comment type="subunit">
    <text evidence="1">NDH-1 is composed of 14 different subunits. Subunits NuoA, H, J, K, L, M, N constitute the membrane sector of the complex.</text>
</comment>
<comment type="subcellular location">
    <subcellularLocation>
        <location evidence="1">Cell inner membrane</location>
        <topology evidence="1">Multi-pass membrane protein</topology>
    </subcellularLocation>
</comment>
<comment type="similarity">
    <text evidence="1">Belongs to the complex I subunit 1 family.</text>
</comment>
<keyword id="KW-0997">Cell inner membrane</keyword>
<keyword id="KW-1003">Cell membrane</keyword>
<keyword id="KW-0472">Membrane</keyword>
<keyword id="KW-0520">NAD</keyword>
<keyword id="KW-0874">Quinone</keyword>
<keyword id="KW-1185">Reference proteome</keyword>
<keyword id="KW-1278">Translocase</keyword>
<keyword id="KW-0812">Transmembrane</keyword>
<keyword id="KW-1133">Transmembrane helix</keyword>
<keyword id="KW-0830">Ubiquinone</keyword>
<organism>
    <name type="scientific">Dinoroseobacter shibae (strain DSM 16493 / NCIMB 14021 / DFL 12)</name>
    <dbReference type="NCBI Taxonomy" id="398580"/>
    <lineage>
        <taxon>Bacteria</taxon>
        <taxon>Pseudomonadati</taxon>
        <taxon>Pseudomonadota</taxon>
        <taxon>Alphaproteobacteria</taxon>
        <taxon>Rhodobacterales</taxon>
        <taxon>Roseobacteraceae</taxon>
        <taxon>Dinoroseobacter</taxon>
    </lineage>
</organism>
<feature type="chain" id="PRO_1000086939" description="NADH-quinone oxidoreductase subunit H">
    <location>
        <begin position="1"/>
        <end position="345"/>
    </location>
</feature>
<feature type="transmembrane region" description="Helical" evidence="1">
    <location>
        <begin position="13"/>
        <end position="33"/>
    </location>
</feature>
<feature type="transmembrane region" description="Helical" evidence="1">
    <location>
        <begin position="84"/>
        <end position="104"/>
    </location>
</feature>
<feature type="transmembrane region" description="Helical" evidence="1">
    <location>
        <begin position="115"/>
        <end position="135"/>
    </location>
</feature>
<feature type="transmembrane region" description="Helical" evidence="1">
    <location>
        <begin position="161"/>
        <end position="181"/>
    </location>
</feature>
<feature type="transmembrane region" description="Helical" evidence="1">
    <location>
        <begin position="190"/>
        <end position="210"/>
    </location>
</feature>
<feature type="transmembrane region" description="Helical" evidence="1">
    <location>
        <begin position="248"/>
        <end position="268"/>
    </location>
</feature>
<feature type="transmembrane region" description="Helical" evidence="1">
    <location>
        <begin position="278"/>
        <end position="298"/>
    </location>
</feature>
<feature type="transmembrane region" description="Helical" evidence="1">
    <location>
        <begin position="309"/>
        <end position="329"/>
    </location>
</feature>
<gene>
    <name evidence="1" type="primary">nuoH</name>
    <name type="ordered locus">Dshi_1321</name>
</gene>